<protein>
    <recommendedName>
        <fullName>Uncharacterized protein MJ0332.1</fullName>
    </recommendedName>
</protein>
<name>Y33A_METJA</name>
<comment type="subcellular location">
    <subcellularLocation>
        <location evidence="2">Cell membrane</location>
        <topology evidence="2">Multi-pass membrane protein</topology>
    </subcellularLocation>
</comment>
<proteinExistence type="predicted"/>
<reference key="1">
    <citation type="journal article" date="1996" name="Science">
        <title>Complete genome sequence of the methanogenic archaeon, Methanococcus jannaschii.</title>
        <authorList>
            <person name="Bult C.J."/>
            <person name="White O."/>
            <person name="Olsen G.J."/>
            <person name="Zhou L."/>
            <person name="Fleischmann R.D."/>
            <person name="Sutton G.G."/>
            <person name="Blake J.A."/>
            <person name="FitzGerald L.M."/>
            <person name="Clayton R.A."/>
            <person name="Gocayne J.D."/>
            <person name="Kerlavage A.R."/>
            <person name="Dougherty B.A."/>
            <person name="Tomb J.-F."/>
            <person name="Adams M.D."/>
            <person name="Reich C.I."/>
            <person name="Overbeek R."/>
            <person name="Kirkness E.F."/>
            <person name="Weinstock K.G."/>
            <person name="Merrick J.M."/>
            <person name="Glodek A."/>
            <person name="Scott J.L."/>
            <person name="Geoghagen N.S.M."/>
            <person name="Weidman J.F."/>
            <person name="Fuhrmann J.L."/>
            <person name="Nguyen D."/>
            <person name="Utterback T.R."/>
            <person name="Kelley J.M."/>
            <person name="Peterson J.D."/>
            <person name="Sadow P.W."/>
            <person name="Hanna M.C."/>
            <person name="Cotton M.D."/>
            <person name="Roberts K.M."/>
            <person name="Hurst M.A."/>
            <person name="Kaine B.P."/>
            <person name="Borodovsky M."/>
            <person name="Klenk H.-P."/>
            <person name="Fraser C.M."/>
            <person name="Smith H.O."/>
            <person name="Woese C.R."/>
            <person name="Venter J.C."/>
        </authorList>
    </citation>
    <scope>NUCLEOTIDE SEQUENCE [LARGE SCALE GENOMIC DNA]</scope>
    <source>
        <strain>ATCC 43067 / DSM 2661 / JAL-1 / JCM 10045 / NBRC 100440</strain>
    </source>
</reference>
<feature type="chain" id="PRO_0000106802" description="Uncharacterized protein MJ0332.1">
    <location>
        <begin position="1"/>
        <end position="132"/>
    </location>
</feature>
<feature type="transmembrane region" description="Helical" evidence="1">
    <location>
        <begin position="12"/>
        <end position="32"/>
    </location>
</feature>
<feature type="transmembrane region" description="Helical" evidence="1">
    <location>
        <begin position="37"/>
        <end position="57"/>
    </location>
</feature>
<organism>
    <name type="scientific">Methanocaldococcus jannaschii (strain ATCC 43067 / DSM 2661 / JAL-1 / JCM 10045 / NBRC 100440)</name>
    <name type="common">Methanococcus jannaschii</name>
    <dbReference type="NCBI Taxonomy" id="243232"/>
    <lineage>
        <taxon>Archaea</taxon>
        <taxon>Methanobacteriati</taxon>
        <taxon>Methanobacteriota</taxon>
        <taxon>Methanomada group</taxon>
        <taxon>Methanococci</taxon>
        <taxon>Methanococcales</taxon>
        <taxon>Methanocaldococcaceae</taxon>
        <taxon>Methanocaldococcus</taxon>
    </lineage>
</organism>
<keyword id="KW-1003">Cell membrane</keyword>
<keyword id="KW-0472">Membrane</keyword>
<keyword id="KW-1185">Reference proteome</keyword>
<keyword id="KW-0812">Transmembrane</keyword>
<keyword id="KW-1133">Transmembrane helix</keyword>
<sequence>MMNGENMDKQTVIGFVVLFCVLELVFYLKKLYQSMALTLAVFGIFSLLFFLLYIPVLSKKAVPYVINYFKPPHQRVREIKVGSDETTDNSIIRLKEKAKTLHPDEGNRISGRSSNSFKDSASCIITIVDDSN</sequence>
<evidence type="ECO:0000255" key="1"/>
<evidence type="ECO:0000305" key="2"/>
<dbReference type="EMBL" id="L77117">
    <property type="protein sequence ID" value="AAB98330.1"/>
    <property type="molecule type" value="Genomic_DNA"/>
</dbReference>
<dbReference type="SMR" id="P81306"/>
<dbReference type="STRING" id="243232.MJ_0332.1"/>
<dbReference type="PaxDb" id="243232-MJ_0332.1"/>
<dbReference type="EnsemblBacteria" id="AAB98330">
    <property type="protein sequence ID" value="AAB98330"/>
    <property type="gene ID" value="MJ_0332.1"/>
</dbReference>
<dbReference type="KEGG" id="mja:MJ_0332.1"/>
<dbReference type="eggNOG" id="arCOG09639">
    <property type="taxonomic scope" value="Archaea"/>
</dbReference>
<dbReference type="HOGENOM" id="CLU_1976518_0_0_2"/>
<dbReference type="InParanoid" id="P81306"/>
<dbReference type="OrthoDB" id="381872at2157"/>
<dbReference type="Proteomes" id="UP000000805">
    <property type="component" value="Chromosome"/>
</dbReference>
<dbReference type="GO" id="GO:0005886">
    <property type="term" value="C:plasma membrane"/>
    <property type="evidence" value="ECO:0007669"/>
    <property type="project" value="UniProtKB-SubCell"/>
</dbReference>
<gene>
    <name type="ordered locus">MJ0332.1</name>
</gene>
<accession>P81306</accession>